<accession>A6WJT5</accession>
<dbReference type="EC" id="1.8.1.2" evidence="1"/>
<dbReference type="EMBL" id="CP000753">
    <property type="protein sequence ID" value="ABS07074.1"/>
    <property type="molecule type" value="Genomic_DNA"/>
</dbReference>
<dbReference type="RefSeq" id="WP_012088384.1">
    <property type="nucleotide sequence ID" value="NC_009665.1"/>
</dbReference>
<dbReference type="SMR" id="A6WJT5"/>
<dbReference type="KEGG" id="sbm:Shew185_0920"/>
<dbReference type="HOGENOM" id="CLU_001975_3_2_6"/>
<dbReference type="UniPathway" id="UPA00140">
    <property type="reaction ID" value="UER00207"/>
</dbReference>
<dbReference type="GO" id="GO:0009337">
    <property type="term" value="C:sulfite reductase complex (NADPH)"/>
    <property type="evidence" value="ECO:0007669"/>
    <property type="project" value="InterPro"/>
</dbReference>
<dbReference type="GO" id="GO:0051539">
    <property type="term" value="F:4 iron, 4 sulfur cluster binding"/>
    <property type="evidence" value="ECO:0007669"/>
    <property type="project" value="UniProtKB-KW"/>
</dbReference>
<dbReference type="GO" id="GO:0020037">
    <property type="term" value="F:heme binding"/>
    <property type="evidence" value="ECO:0007669"/>
    <property type="project" value="InterPro"/>
</dbReference>
<dbReference type="GO" id="GO:0046872">
    <property type="term" value="F:metal ion binding"/>
    <property type="evidence" value="ECO:0007669"/>
    <property type="project" value="UniProtKB-KW"/>
</dbReference>
<dbReference type="GO" id="GO:0050661">
    <property type="term" value="F:NADP binding"/>
    <property type="evidence" value="ECO:0007669"/>
    <property type="project" value="InterPro"/>
</dbReference>
<dbReference type="GO" id="GO:0050311">
    <property type="term" value="F:sulfite reductase (ferredoxin) activity"/>
    <property type="evidence" value="ECO:0007669"/>
    <property type="project" value="TreeGrafter"/>
</dbReference>
<dbReference type="GO" id="GO:0004783">
    <property type="term" value="F:sulfite reductase (NADPH) activity"/>
    <property type="evidence" value="ECO:0007669"/>
    <property type="project" value="UniProtKB-UniRule"/>
</dbReference>
<dbReference type="GO" id="GO:0019344">
    <property type="term" value="P:cysteine biosynthetic process"/>
    <property type="evidence" value="ECO:0007669"/>
    <property type="project" value="UniProtKB-KW"/>
</dbReference>
<dbReference type="GO" id="GO:0070814">
    <property type="term" value="P:hydrogen sulfide biosynthetic process"/>
    <property type="evidence" value="ECO:0007669"/>
    <property type="project" value="UniProtKB-UniRule"/>
</dbReference>
<dbReference type="GO" id="GO:0000103">
    <property type="term" value="P:sulfate assimilation"/>
    <property type="evidence" value="ECO:0007669"/>
    <property type="project" value="UniProtKB-UniRule"/>
</dbReference>
<dbReference type="FunFam" id="3.30.413.10:FF:000003">
    <property type="entry name" value="Sulfite reductase [NADPH] hemoprotein beta-component"/>
    <property type="match status" value="1"/>
</dbReference>
<dbReference type="FunFam" id="3.30.413.10:FF:000004">
    <property type="entry name" value="Sulfite reductase [NADPH] hemoprotein beta-component"/>
    <property type="match status" value="1"/>
</dbReference>
<dbReference type="Gene3D" id="3.30.413.10">
    <property type="entry name" value="Sulfite Reductase Hemoprotein, domain 1"/>
    <property type="match status" value="2"/>
</dbReference>
<dbReference type="HAMAP" id="MF_01540">
    <property type="entry name" value="CysI"/>
    <property type="match status" value="1"/>
</dbReference>
<dbReference type="InterPro" id="IPR011786">
    <property type="entry name" value="CysI"/>
</dbReference>
<dbReference type="InterPro" id="IPR005117">
    <property type="entry name" value="NiRdtase/SiRdtase_haem-b_fer"/>
</dbReference>
<dbReference type="InterPro" id="IPR036136">
    <property type="entry name" value="Nit/Sulf_reduc_fer-like_dom_sf"/>
</dbReference>
<dbReference type="InterPro" id="IPR006067">
    <property type="entry name" value="NO2/SO3_Rdtase_4Fe4S_dom"/>
</dbReference>
<dbReference type="InterPro" id="IPR045169">
    <property type="entry name" value="NO2/SO3_Rdtase_4Fe4S_prot"/>
</dbReference>
<dbReference type="InterPro" id="IPR045854">
    <property type="entry name" value="NO2/SO3_Rdtase_4Fe4S_sf"/>
</dbReference>
<dbReference type="InterPro" id="IPR006066">
    <property type="entry name" value="NO2/SO3_Rdtase_FeS/sirohaem_BS"/>
</dbReference>
<dbReference type="NCBIfam" id="TIGR02041">
    <property type="entry name" value="CysI"/>
    <property type="match status" value="1"/>
</dbReference>
<dbReference type="NCBIfam" id="NF010029">
    <property type="entry name" value="PRK13504.1"/>
    <property type="match status" value="1"/>
</dbReference>
<dbReference type="PANTHER" id="PTHR11493:SF47">
    <property type="entry name" value="SULFITE REDUCTASE [NADPH] SUBUNIT BETA"/>
    <property type="match status" value="1"/>
</dbReference>
<dbReference type="PANTHER" id="PTHR11493">
    <property type="entry name" value="SULFITE REDUCTASE [NADPH] SUBUNIT BETA-RELATED"/>
    <property type="match status" value="1"/>
</dbReference>
<dbReference type="Pfam" id="PF01077">
    <property type="entry name" value="NIR_SIR"/>
    <property type="match status" value="1"/>
</dbReference>
<dbReference type="Pfam" id="PF03460">
    <property type="entry name" value="NIR_SIR_ferr"/>
    <property type="match status" value="2"/>
</dbReference>
<dbReference type="PRINTS" id="PR00397">
    <property type="entry name" value="SIROHAEM"/>
</dbReference>
<dbReference type="SUPFAM" id="SSF56014">
    <property type="entry name" value="Nitrite and sulphite reductase 4Fe-4S domain-like"/>
    <property type="match status" value="2"/>
</dbReference>
<dbReference type="SUPFAM" id="SSF55124">
    <property type="entry name" value="Nitrite/Sulfite reductase N-terminal domain-like"/>
    <property type="match status" value="2"/>
</dbReference>
<dbReference type="PROSITE" id="PS00365">
    <property type="entry name" value="NIR_SIR"/>
    <property type="match status" value="1"/>
</dbReference>
<keyword id="KW-0004">4Fe-4S</keyword>
<keyword id="KW-0028">Amino-acid biosynthesis</keyword>
<keyword id="KW-0198">Cysteine biosynthesis</keyword>
<keyword id="KW-0349">Heme</keyword>
<keyword id="KW-0408">Iron</keyword>
<keyword id="KW-0411">Iron-sulfur</keyword>
<keyword id="KW-0479">Metal-binding</keyword>
<keyword id="KW-0521">NADP</keyword>
<keyword id="KW-0560">Oxidoreductase</keyword>
<organism>
    <name type="scientific">Shewanella baltica (strain OS185)</name>
    <dbReference type="NCBI Taxonomy" id="402882"/>
    <lineage>
        <taxon>Bacteria</taxon>
        <taxon>Pseudomonadati</taxon>
        <taxon>Pseudomonadota</taxon>
        <taxon>Gammaproteobacteria</taxon>
        <taxon>Alteromonadales</taxon>
        <taxon>Shewanellaceae</taxon>
        <taxon>Shewanella</taxon>
    </lineage>
</organism>
<evidence type="ECO:0000255" key="1">
    <source>
        <dbReference type="HAMAP-Rule" id="MF_01540"/>
    </source>
</evidence>
<proteinExistence type="inferred from homology"/>
<protein>
    <recommendedName>
        <fullName evidence="1">Sulfite reductase [NADPH] hemoprotein beta-component</fullName>
        <shortName evidence="1">SiR-HP</shortName>
        <shortName evidence="1">SiRHP</shortName>
        <ecNumber evidence="1">1.8.1.2</ecNumber>
    </recommendedName>
</protein>
<gene>
    <name evidence="1" type="primary">cysI</name>
    <name type="ordered locus">Shew185_0920</name>
</gene>
<comment type="function">
    <text evidence="1">Component of the sulfite reductase complex that catalyzes the 6-electron reduction of sulfite to sulfide. This is one of several activities required for the biosynthesis of L-cysteine from sulfate.</text>
</comment>
<comment type="catalytic activity">
    <reaction evidence="1">
        <text>hydrogen sulfide + 3 NADP(+) + 3 H2O = sulfite + 3 NADPH + 4 H(+)</text>
        <dbReference type="Rhea" id="RHEA:13801"/>
        <dbReference type="ChEBI" id="CHEBI:15377"/>
        <dbReference type="ChEBI" id="CHEBI:15378"/>
        <dbReference type="ChEBI" id="CHEBI:17359"/>
        <dbReference type="ChEBI" id="CHEBI:29919"/>
        <dbReference type="ChEBI" id="CHEBI:57783"/>
        <dbReference type="ChEBI" id="CHEBI:58349"/>
        <dbReference type="EC" id="1.8.1.2"/>
    </reaction>
</comment>
<comment type="cofactor">
    <cofactor evidence="1">
        <name>siroheme</name>
        <dbReference type="ChEBI" id="CHEBI:60052"/>
    </cofactor>
    <text evidence="1">Binds 1 siroheme per subunit.</text>
</comment>
<comment type="cofactor">
    <cofactor evidence="1">
        <name>[4Fe-4S] cluster</name>
        <dbReference type="ChEBI" id="CHEBI:49883"/>
    </cofactor>
    <text evidence="1">Binds 1 [4Fe-4S] cluster per subunit.</text>
</comment>
<comment type="pathway">
    <text evidence="1">Sulfur metabolism; hydrogen sulfide biosynthesis; hydrogen sulfide from sulfite (NADPH route): step 1/1.</text>
</comment>
<comment type="subunit">
    <text evidence="1">Alpha(8)-beta(8). The alpha component is a flavoprotein, the beta component is a hemoprotein.</text>
</comment>
<comment type="similarity">
    <text evidence="1">Belongs to the nitrite and sulfite reductase 4Fe-4S domain family.</text>
</comment>
<feature type="chain" id="PRO_1000068769" description="Sulfite reductase [NADPH] hemoprotein beta-component">
    <location>
        <begin position="1"/>
        <end position="565"/>
    </location>
</feature>
<feature type="binding site" evidence="1">
    <location>
        <position position="429"/>
    </location>
    <ligand>
        <name>[4Fe-4S] cluster</name>
        <dbReference type="ChEBI" id="CHEBI:49883"/>
    </ligand>
</feature>
<feature type="binding site" evidence="1">
    <location>
        <position position="435"/>
    </location>
    <ligand>
        <name>[4Fe-4S] cluster</name>
        <dbReference type="ChEBI" id="CHEBI:49883"/>
    </ligand>
</feature>
<feature type="binding site" evidence="1">
    <location>
        <position position="474"/>
    </location>
    <ligand>
        <name>[4Fe-4S] cluster</name>
        <dbReference type="ChEBI" id="CHEBI:49883"/>
    </ligand>
</feature>
<feature type="binding site" evidence="1">
    <location>
        <position position="478"/>
    </location>
    <ligand>
        <name>[4Fe-4S] cluster</name>
        <dbReference type="ChEBI" id="CHEBI:49883"/>
    </ligand>
</feature>
<feature type="binding site" description="axial binding residue" evidence="1">
    <location>
        <position position="478"/>
    </location>
    <ligand>
        <name>siroheme</name>
        <dbReference type="ChEBI" id="CHEBI:60052"/>
    </ligand>
    <ligandPart>
        <name>Fe</name>
        <dbReference type="ChEBI" id="CHEBI:18248"/>
    </ligandPart>
</feature>
<name>CYSI_SHEB8</name>
<reference key="1">
    <citation type="submission" date="2007-07" db="EMBL/GenBank/DDBJ databases">
        <title>Complete sequence of chromosome of Shewanella baltica OS185.</title>
        <authorList>
            <consortium name="US DOE Joint Genome Institute"/>
            <person name="Copeland A."/>
            <person name="Lucas S."/>
            <person name="Lapidus A."/>
            <person name="Barry K."/>
            <person name="Glavina del Rio T."/>
            <person name="Dalin E."/>
            <person name="Tice H."/>
            <person name="Pitluck S."/>
            <person name="Sims D."/>
            <person name="Brettin T."/>
            <person name="Bruce D."/>
            <person name="Detter J.C."/>
            <person name="Han C."/>
            <person name="Schmutz J."/>
            <person name="Larimer F."/>
            <person name="Land M."/>
            <person name="Hauser L."/>
            <person name="Kyrpides N."/>
            <person name="Mikhailova N."/>
            <person name="Brettar I."/>
            <person name="Rodrigues J."/>
            <person name="Konstantinidis K."/>
            <person name="Tiedje J."/>
            <person name="Richardson P."/>
        </authorList>
    </citation>
    <scope>NUCLEOTIDE SEQUENCE [LARGE SCALE GENOMIC DNA]</scope>
    <source>
        <strain>OS185</strain>
    </source>
</reference>
<sequence length="565" mass="63021">MSEQKLALNEYLKTDSDYLRGTIKEGLDSAVTGSFSDGDQQLIKFHGFYQQDDRDLRNERKEQKLEPLYSFMLRARVPGGICSPQQWLGVDKIASTLTSSNSIRLTTRQTFQYHGIPKRNLKTIIQDLDREALDSIAACGDVNRNVMCNPNPVESKLHEQAYAVAKQLSDHLLPHTRAYAEIWLDEEKLLSTEDETVEPVYGKTYLPRKFKMAVAVPPDNDVDVYTNDLGFIAVAENGELVGFNLTAGGGMGSTHGEVETFPRLADDFGFIKTEDVMKFAEAVMTVQRDWGNRVNRKRSRLKYTIVDHGYEQFKAEVELRAGVKFEPKRDVVIGDRGDRYGWVEGVDGKWHLTLFIESGRIKDLPGQTLQTGLREIAKIHKGDFRMTSNQNMIIAGVAAEDKATIEGLARKHGLLGQVLTQTRGHSIACVALPTCPLAMAEAERYFPEFIDHIDALQAKHGISEQAIVVRMTGCPNGCARPFAAEIGLVGKAPGRYNLYLGASFEGTRLNKMHRENIQEAEILAELDTLFGRYAVERDAGETFGNFTVRVGVVKAVIDAAKDFHG</sequence>